<sequence length="654" mass="72313">MGRIPTRELSSYLLTGRVFSRDCTRLQRLPARNISKQHFAVGQPAQRRWNHTAPEAGHTTTTQPPPGQPAPHLRKILKDQAKASKAQAKGKKKRSSADNQTVPGWELTVGIEIHAQLNTDRKLFSPAPLASTEDNTRAPAPNSLVAPFDLAIPGTQPLFQQATLVPAIRAAVALNCAVQPVSSFDRKHYFHWDQPSGYQITQYYAPLARDGYVDLRARDGIAAQDVGGGEPLRIRVKQVQMEQDTAKTLARPDGVHWLDFNRCGAPLVEIISEPDIHHPATAAAFVRKVQMLLGAADACVVGMEKGGLRADVNVSVRRVEDGKTSSAKLGQRTEIKNLFSFKAVEDAIIAERDRQIKLLDEGGVVLGETRGWSLGSTETRRLRGKEGEVDYRYMPDPDLGPVLVGQDVVEHLKSTMGVMPDQELDDLVSSYGLSEKDAMSLMLLEDGGRLQFYYKTVDALEQRLQNQGDSTKVTAESLVQARILTGNWILHVLGSLTSENNQRDRAAAGLSERDLGVTSEGDAFISADDLADILFFLHTSRIRQGTAKDLLFAMFNEVMPAQYISTPAGIERYITDNDLWFSELSPQEYSELAESVLDEEEHVLKEFMGARYPQGKLMFLVGMMMKSGARERIDPATAQKVMRDVVETRVAAMK</sequence>
<protein>
    <recommendedName>
        <fullName evidence="1">Glutamyl-tRNA(Gln) amidotransferase subunit B, mitochondrial</fullName>
        <shortName evidence="1">Glu-AdT subunit B</shortName>
        <ecNumber evidence="1">6.3.5.-</ecNumber>
    </recommendedName>
</protein>
<evidence type="ECO:0000255" key="1">
    <source>
        <dbReference type="HAMAP-Rule" id="MF_03147"/>
    </source>
</evidence>
<evidence type="ECO:0000256" key="2">
    <source>
        <dbReference type="SAM" id="MobiDB-lite"/>
    </source>
</evidence>
<feature type="transit peptide" description="Mitochondrion" evidence="1">
    <location>
        <begin position="1"/>
        <end position="8"/>
    </location>
</feature>
<feature type="chain" id="PRO_0000413261" description="Glutamyl-tRNA(Gln) amidotransferase subunit B, mitochondrial">
    <location>
        <begin position="9"/>
        <end position="654"/>
    </location>
</feature>
<feature type="region of interest" description="Disordered" evidence="2">
    <location>
        <begin position="79"/>
        <end position="101"/>
    </location>
</feature>
<proteinExistence type="inferred from homology"/>
<reference key="1">
    <citation type="journal article" date="2005" name="Nature">
        <title>The genome sequence of the rice blast fungus Magnaporthe grisea.</title>
        <authorList>
            <person name="Dean R.A."/>
            <person name="Talbot N.J."/>
            <person name="Ebbole D.J."/>
            <person name="Farman M.L."/>
            <person name="Mitchell T.K."/>
            <person name="Orbach M.J."/>
            <person name="Thon M.R."/>
            <person name="Kulkarni R."/>
            <person name="Xu J.-R."/>
            <person name="Pan H."/>
            <person name="Read N.D."/>
            <person name="Lee Y.-H."/>
            <person name="Carbone I."/>
            <person name="Brown D."/>
            <person name="Oh Y.Y."/>
            <person name="Donofrio N."/>
            <person name="Jeong J.S."/>
            <person name="Soanes D.M."/>
            <person name="Djonovic S."/>
            <person name="Kolomiets E."/>
            <person name="Rehmeyer C."/>
            <person name="Li W."/>
            <person name="Harding M."/>
            <person name="Kim S."/>
            <person name="Lebrun M.-H."/>
            <person name="Bohnert H."/>
            <person name="Coughlan S."/>
            <person name="Butler J."/>
            <person name="Calvo S.E."/>
            <person name="Ma L.-J."/>
            <person name="Nicol R."/>
            <person name="Purcell S."/>
            <person name="Nusbaum C."/>
            <person name="Galagan J.E."/>
            <person name="Birren B.W."/>
        </authorList>
    </citation>
    <scope>NUCLEOTIDE SEQUENCE [LARGE SCALE GENOMIC DNA]</scope>
    <source>
        <strain>70-15 / ATCC MYA-4617 / FGSC 8958</strain>
    </source>
</reference>
<accession>A4R713</accession>
<accession>G4N8P1</accession>
<comment type="function">
    <text evidence="1">Allows the formation of correctly charged Gln-tRNA(Gln) through the transamidation of misacylated Glu-tRNA(Gln) in the mitochondria. The reaction takes place in the presence of glutamine and ATP through an activated gamma-phospho-Glu-tRNA(Gln).</text>
</comment>
<comment type="catalytic activity">
    <reaction evidence="1">
        <text>L-glutamyl-tRNA(Gln) + L-glutamine + ATP + H2O = L-glutaminyl-tRNA(Gln) + L-glutamate + ADP + phosphate + H(+)</text>
        <dbReference type="Rhea" id="RHEA:17521"/>
        <dbReference type="Rhea" id="RHEA-COMP:9681"/>
        <dbReference type="Rhea" id="RHEA-COMP:9684"/>
        <dbReference type="ChEBI" id="CHEBI:15377"/>
        <dbReference type="ChEBI" id="CHEBI:15378"/>
        <dbReference type="ChEBI" id="CHEBI:29985"/>
        <dbReference type="ChEBI" id="CHEBI:30616"/>
        <dbReference type="ChEBI" id="CHEBI:43474"/>
        <dbReference type="ChEBI" id="CHEBI:58359"/>
        <dbReference type="ChEBI" id="CHEBI:78520"/>
        <dbReference type="ChEBI" id="CHEBI:78521"/>
        <dbReference type="ChEBI" id="CHEBI:456216"/>
    </reaction>
</comment>
<comment type="subunit">
    <text evidence="1">Subunit of the heterotrimeric GatCAB amidotransferase (AdT) complex, composed of A, B and C subunits.</text>
</comment>
<comment type="subcellular location">
    <subcellularLocation>
        <location evidence="1">Mitochondrion</location>
    </subcellularLocation>
</comment>
<comment type="similarity">
    <text evidence="1">Belongs to the GatB/GatE family. GatB subfamily.</text>
</comment>
<gene>
    <name type="ORF">MGG_03390</name>
</gene>
<keyword id="KW-0067">ATP-binding</keyword>
<keyword id="KW-0436">Ligase</keyword>
<keyword id="KW-0496">Mitochondrion</keyword>
<keyword id="KW-0547">Nucleotide-binding</keyword>
<keyword id="KW-0648">Protein biosynthesis</keyword>
<keyword id="KW-1185">Reference proteome</keyword>
<keyword id="KW-0809">Transit peptide</keyword>
<name>GATB_PYRO7</name>
<dbReference type="EC" id="6.3.5.-" evidence="1"/>
<dbReference type="EMBL" id="CM001234">
    <property type="protein sequence ID" value="EHA50235.1"/>
    <property type="molecule type" value="Genomic_DNA"/>
</dbReference>
<dbReference type="RefSeq" id="XP_003716554.1">
    <property type="nucleotide sequence ID" value="XM_003716506.1"/>
</dbReference>
<dbReference type="SMR" id="A4R713"/>
<dbReference type="FunCoup" id="A4R713">
    <property type="interactions" value="358"/>
</dbReference>
<dbReference type="STRING" id="242507.A4R713"/>
<dbReference type="EnsemblFungi" id="MGG_03390T0">
    <property type="protein sequence ID" value="MGG_03390T0"/>
    <property type="gene ID" value="MGG_03390"/>
</dbReference>
<dbReference type="GeneID" id="2676881"/>
<dbReference type="KEGG" id="mgr:MGG_03390"/>
<dbReference type="VEuPathDB" id="FungiDB:MGG_03390"/>
<dbReference type="eggNOG" id="KOG2438">
    <property type="taxonomic scope" value="Eukaryota"/>
</dbReference>
<dbReference type="HOGENOM" id="CLU_019240_4_1_1"/>
<dbReference type="InParanoid" id="A4R713"/>
<dbReference type="OMA" id="ARKWWMG"/>
<dbReference type="OrthoDB" id="1722066at2759"/>
<dbReference type="Proteomes" id="UP000009058">
    <property type="component" value="Chromosome 4"/>
</dbReference>
<dbReference type="GO" id="GO:0030956">
    <property type="term" value="C:glutamyl-tRNA(Gln) amidotransferase complex"/>
    <property type="evidence" value="ECO:0007669"/>
    <property type="project" value="UniProtKB-UniRule"/>
</dbReference>
<dbReference type="GO" id="GO:0005739">
    <property type="term" value="C:mitochondrion"/>
    <property type="evidence" value="ECO:0007669"/>
    <property type="project" value="UniProtKB-SubCell"/>
</dbReference>
<dbReference type="GO" id="GO:0005524">
    <property type="term" value="F:ATP binding"/>
    <property type="evidence" value="ECO:0007669"/>
    <property type="project" value="UniProtKB-KW"/>
</dbReference>
<dbReference type="GO" id="GO:0050567">
    <property type="term" value="F:glutaminyl-tRNA synthase (glutamine-hydrolyzing) activity"/>
    <property type="evidence" value="ECO:0007669"/>
    <property type="project" value="UniProtKB-UniRule"/>
</dbReference>
<dbReference type="GO" id="GO:0070681">
    <property type="term" value="P:glutaminyl-tRNAGln biosynthesis via transamidation"/>
    <property type="evidence" value="ECO:0007669"/>
    <property type="project" value="UniProtKB-UniRule"/>
</dbReference>
<dbReference type="GO" id="GO:0032543">
    <property type="term" value="P:mitochondrial translation"/>
    <property type="evidence" value="ECO:0007669"/>
    <property type="project" value="UniProtKB-UniRule"/>
</dbReference>
<dbReference type="HAMAP" id="MF_00121">
    <property type="entry name" value="GatB"/>
    <property type="match status" value="1"/>
</dbReference>
<dbReference type="InterPro" id="IPR017959">
    <property type="entry name" value="Asn/Gln-tRNA_amidoTrfase_suB/E"/>
</dbReference>
<dbReference type="InterPro" id="IPR006075">
    <property type="entry name" value="Asn/Gln-tRNA_Trfase_suB/E_cat"/>
</dbReference>
<dbReference type="InterPro" id="IPR004413">
    <property type="entry name" value="GatB"/>
</dbReference>
<dbReference type="InterPro" id="IPR017958">
    <property type="entry name" value="Gln-tRNA_amidoTrfase_suB_CS"/>
</dbReference>
<dbReference type="InterPro" id="IPR014746">
    <property type="entry name" value="Gln_synth/guanido_kin_cat_dom"/>
</dbReference>
<dbReference type="NCBIfam" id="TIGR00133">
    <property type="entry name" value="gatB"/>
    <property type="match status" value="1"/>
</dbReference>
<dbReference type="NCBIfam" id="NF004012">
    <property type="entry name" value="PRK05477.1-2"/>
    <property type="match status" value="1"/>
</dbReference>
<dbReference type="PANTHER" id="PTHR11659">
    <property type="entry name" value="GLUTAMYL-TRNA GLN AMIDOTRANSFERASE SUBUNIT B MITOCHONDRIAL AND PROKARYOTIC PET112-RELATED"/>
    <property type="match status" value="1"/>
</dbReference>
<dbReference type="PANTHER" id="PTHR11659:SF0">
    <property type="entry name" value="GLUTAMYL-TRNA(GLN) AMIDOTRANSFERASE SUBUNIT B, MITOCHONDRIAL"/>
    <property type="match status" value="1"/>
</dbReference>
<dbReference type="Pfam" id="PF02934">
    <property type="entry name" value="GatB_N"/>
    <property type="match status" value="1"/>
</dbReference>
<dbReference type="SUPFAM" id="SSF55931">
    <property type="entry name" value="Glutamine synthetase/guanido kinase"/>
    <property type="match status" value="1"/>
</dbReference>
<dbReference type="PROSITE" id="PS01234">
    <property type="entry name" value="GATB"/>
    <property type="match status" value="1"/>
</dbReference>
<organism>
    <name type="scientific">Pyricularia oryzae (strain 70-15 / ATCC MYA-4617 / FGSC 8958)</name>
    <name type="common">Rice blast fungus</name>
    <name type="synonym">Magnaporthe oryzae</name>
    <dbReference type="NCBI Taxonomy" id="242507"/>
    <lineage>
        <taxon>Eukaryota</taxon>
        <taxon>Fungi</taxon>
        <taxon>Dikarya</taxon>
        <taxon>Ascomycota</taxon>
        <taxon>Pezizomycotina</taxon>
        <taxon>Sordariomycetes</taxon>
        <taxon>Sordariomycetidae</taxon>
        <taxon>Magnaporthales</taxon>
        <taxon>Pyriculariaceae</taxon>
        <taxon>Pyricularia</taxon>
    </lineage>
</organism>